<evidence type="ECO:0000255" key="1">
    <source>
        <dbReference type="HAMAP-Rule" id="MF_00164"/>
    </source>
</evidence>
<proteinExistence type="evidence at protein level"/>
<organism>
    <name type="scientific">Staphylococcus aureus (strain N315)</name>
    <dbReference type="NCBI Taxonomy" id="158879"/>
    <lineage>
        <taxon>Bacteria</taxon>
        <taxon>Bacillati</taxon>
        <taxon>Bacillota</taxon>
        <taxon>Bacilli</taxon>
        <taxon>Bacillales</taxon>
        <taxon>Staphylococcaceae</taxon>
        <taxon>Staphylococcus</taxon>
    </lineage>
</organism>
<comment type="function">
    <text evidence="1">Catalyzes the first step in hexosamine metabolism, converting fructose-6P into glucosamine-6P using glutamine as a nitrogen source.</text>
</comment>
<comment type="catalytic activity">
    <reaction evidence="1">
        <text>D-fructose 6-phosphate + L-glutamine = D-glucosamine 6-phosphate + L-glutamate</text>
        <dbReference type="Rhea" id="RHEA:13237"/>
        <dbReference type="ChEBI" id="CHEBI:29985"/>
        <dbReference type="ChEBI" id="CHEBI:58359"/>
        <dbReference type="ChEBI" id="CHEBI:58725"/>
        <dbReference type="ChEBI" id="CHEBI:61527"/>
        <dbReference type="EC" id="2.6.1.16"/>
    </reaction>
</comment>
<comment type="subunit">
    <text evidence="1">Homodimer.</text>
</comment>
<comment type="subcellular location">
    <subcellularLocation>
        <location evidence="1">Cytoplasm</location>
    </subcellularLocation>
</comment>
<name>GLMS_STAAN</name>
<reference key="1">
    <citation type="journal article" date="2001" name="Lancet">
        <title>Whole genome sequencing of meticillin-resistant Staphylococcus aureus.</title>
        <authorList>
            <person name="Kuroda M."/>
            <person name="Ohta T."/>
            <person name="Uchiyama I."/>
            <person name="Baba T."/>
            <person name="Yuzawa H."/>
            <person name="Kobayashi I."/>
            <person name="Cui L."/>
            <person name="Oguchi A."/>
            <person name="Aoki K."/>
            <person name="Nagai Y."/>
            <person name="Lian J.-Q."/>
            <person name="Ito T."/>
            <person name="Kanamori M."/>
            <person name="Matsumaru H."/>
            <person name="Maruyama A."/>
            <person name="Murakami H."/>
            <person name="Hosoyama A."/>
            <person name="Mizutani-Ui Y."/>
            <person name="Takahashi N.K."/>
            <person name="Sawano T."/>
            <person name="Inoue R."/>
            <person name="Kaito C."/>
            <person name="Sekimizu K."/>
            <person name="Hirakawa H."/>
            <person name="Kuhara S."/>
            <person name="Goto S."/>
            <person name="Yabuzaki J."/>
            <person name="Kanehisa M."/>
            <person name="Yamashita A."/>
            <person name="Oshima K."/>
            <person name="Furuya K."/>
            <person name="Yoshino C."/>
            <person name="Shiba T."/>
            <person name="Hattori M."/>
            <person name="Ogasawara N."/>
            <person name="Hayashi H."/>
            <person name="Hiramatsu K."/>
        </authorList>
    </citation>
    <scope>NUCLEOTIDE SEQUENCE [LARGE SCALE GENOMIC DNA]</scope>
    <source>
        <strain>N315</strain>
    </source>
</reference>
<reference key="2">
    <citation type="submission" date="2005-11" db="UniProtKB">
        <title>Shotgun proteomic analysis of total protein extract of S. aureus S30 versus N315.</title>
        <authorList>
            <person name="Stenz L."/>
        </authorList>
    </citation>
    <scope>IDENTIFICATION BY MASS SPECTROMETRY</scope>
</reference>
<reference key="3">
    <citation type="submission" date="2007-10" db="UniProtKB">
        <title>Shotgun proteomic analysis of total and membrane protein extracts of S. aureus strain N315.</title>
        <authorList>
            <person name="Vaezzadeh A.R."/>
            <person name="Deshusses J."/>
            <person name="Lescuyer P."/>
            <person name="Hochstrasser D.F."/>
        </authorList>
    </citation>
    <scope>IDENTIFICATION BY MASS SPECTROMETRY [LARGE SCALE ANALYSIS]</scope>
    <source>
        <strain>N315</strain>
    </source>
</reference>
<dbReference type="EC" id="2.6.1.16" evidence="1"/>
<dbReference type="EMBL" id="BA000018">
    <property type="protein sequence ID" value="BAB43247.1"/>
    <property type="molecule type" value="Genomic_DNA"/>
</dbReference>
<dbReference type="PIR" id="F90010">
    <property type="entry name" value="F90010"/>
</dbReference>
<dbReference type="RefSeq" id="WP_000334463.1">
    <property type="nucleotide sequence ID" value="NC_002745.2"/>
</dbReference>
<dbReference type="SMR" id="P64228"/>
<dbReference type="EnsemblBacteria" id="BAB43247">
    <property type="protein sequence ID" value="BAB43247"/>
    <property type="gene ID" value="BAB43247"/>
</dbReference>
<dbReference type="KEGG" id="sau:SA1959"/>
<dbReference type="HOGENOM" id="CLU_012520_7_1_9"/>
<dbReference type="GO" id="GO:0005829">
    <property type="term" value="C:cytosol"/>
    <property type="evidence" value="ECO:0007669"/>
    <property type="project" value="TreeGrafter"/>
</dbReference>
<dbReference type="GO" id="GO:0097367">
    <property type="term" value="F:carbohydrate derivative binding"/>
    <property type="evidence" value="ECO:0007669"/>
    <property type="project" value="InterPro"/>
</dbReference>
<dbReference type="GO" id="GO:0004360">
    <property type="term" value="F:glutamine-fructose-6-phosphate transaminase (isomerizing) activity"/>
    <property type="evidence" value="ECO:0007669"/>
    <property type="project" value="UniProtKB-UniRule"/>
</dbReference>
<dbReference type="GO" id="GO:0005975">
    <property type="term" value="P:carbohydrate metabolic process"/>
    <property type="evidence" value="ECO:0007669"/>
    <property type="project" value="UniProtKB-UniRule"/>
</dbReference>
<dbReference type="GO" id="GO:0006002">
    <property type="term" value="P:fructose 6-phosphate metabolic process"/>
    <property type="evidence" value="ECO:0007669"/>
    <property type="project" value="TreeGrafter"/>
</dbReference>
<dbReference type="GO" id="GO:0006487">
    <property type="term" value="P:protein N-linked glycosylation"/>
    <property type="evidence" value="ECO:0007669"/>
    <property type="project" value="TreeGrafter"/>
</dbReference>
<dbReference type="GO" id="GO:0006047">
    <property type="term" value="P:UDP-N-acetylglucosamine metabolic process"/>
    <property type="evidence" value="ECO:0007669"/>
    <property type="project" value="TreeGrafter"/>
</dbReference>
<dbReference type="CDD" id="cd00714">
    <property type="entry name" value="GFAT"/>
    <property type="match status" value="1"/>
</dbReference>
<dbReference type="CDD" id="cd05008">
    <property type="entry name" value="SIS_GlmS_GlmD_1"/>
    <property type="match status" value="1"/>
</dbReference>
<dbReference type="CDD" id="cd05009">
    <property type="entry name" value="SIS_GlmS_GlmD_2"/>
    <property type="match status" value="1"/>
</dbReference>
<dbReference type="FunFam" id="3.40.50.10490:FF:000001">
    <property type="entry name" value="Glutamine--fructose-6-phosphate aminotransferase [isomerizing]"/>
    <property type="match status" value="1"/>
</dbReference>
<dbReference type="FunFam" id="3.40.50.10490:FF:000022">
    <property type="entry name" value="Glutamine--fructose-6-phosphate aminotransferase [isomerizing]"/>
    <property type="match status" value="1"/>
</dbReference>
<dbReference type="FunFam" id="3.60.20.10:FF:000006">
    <property type="entry name" value="Glutamine--fructose-6-phosphate aminotransferase [isomerizing]"/>
    <property type="match status" value="1"/>
</dbReference>
<dbReference type="Gene3D" id="3.40.50.10490">
    <property type="entry name" value="Glucose-6-phosphate isomerase like protein, domain 1"/>
    <property type="match status" value="2"/>
</dbReference>
<dbReference type="Gene3D" id="3.60.20.10">
    <property type="entry name" value="Glutamine Phosphoribosylpyrophosphate, subunit 1, domain 1"/>
    <property type="match status" value="1"/>
</dbReference>
<dbReference type="HAMAP" id="MF_00164">
    <property type="entry name" value="GlmS"/>
    <property type="match status" value="1"/>
</dbReference>
<dbReference type="InterPro" id="IPR017932">
    <property type="entry name" value="GATase_2_dom"/>
</dbReference>
<dbReference type="InterPro" id="IPR005855">
    <property type="entry name" value="GFAT"/>
</dbReference>
<dbReference type="InterPro" id="IPR047084">
    <property type="entry name" value="GFAT_N"/>
</dbReference>
<dbReference type="InterPro" id="IPR035466">
    <property type="entry name" value="GlmS/AgaS_SIS"/>
</dbReference>
<dbReference type="InterPro" id="IPR035490">
    <property type="entry name" value="GlmS/FrlB_SIS"/>
</dbReference>
<dbReference type="InterPro" id="IPR029055">
    <property type="entry name" value="Ntn_hydrolases_N"/>
</dbReference>
<dbReference type="InterPro" id="IPR001347">
    <property type="entry name" value="SIS_dom"/>
</dbReference>
<dbReference type="InterPro" id="IPR046348">
    <property type="entry name" value="SIS_dom_sf"/>
</dbReference>
<dbReference type="NCBIfam" id="TIGR01135">
    <property type="entry name" value="glmS"/>
    <property type="match status" value="1"/>
</dbReference>
<dbReference type="NCBIfam" id="NF001484">
    <property type="entry name" value="PRK00331.1"/>
    <property type="match status" value="1"/>
</dbReference>
<dbReference type="PANTHER" id="PTHR10937">
    <property type="entry name" value="GLUCOSAMINE--FRUCTOSE-6-PHOSPHATE AMINOTRANSFERASE, ISOMERIZING"/>
    <property type="match status" value="1"/>
</dbReference>
<dbReference type="PANTHER" id="PTHR10937:SF0">
    <property type="entry name" value="GLUTAMINE--FRUCTOSE-6-PHOSPHATE TRANSAMINASE (ISOMERIZING)"/>
    <property type="match status" value="1"/>
</dbReference>
<dbReference type="Pfam" id="PF13522">
    <property type="entry name" value="GATase_6"/>
    <property type="match status" value="1"/>
</dbReference>
<dbReference type="Pfam" id="PF01380">
    <property type="entry name" value="SIS"/>
    <property type="match status" value="2"/>
</dbReference>
<dbReference type="SUPFAM" id="SSF56235">
    <property type="entry name" value="N-terminal nucleophile aminohydrolases (Ntn hydrolases)"/>
    <property type="match status" value="1"/>
</dbReference>
<dbReference type="SUPFAM" id="SSF53697">
    <property type="entry name" value="SIS domain"/>
    <property type="match status" value="1"/>
</dbReference>
<dbReference type="PROSITE" id="PS51278">
    <property type="entry name" value="GATASE_TYPE_2"/>
    <property type="match status" value="1"/>
</dbReference>
<dbReference type="PROSITE" id="PS51464">
    <property type="entry name" value="SIS"/>
    <property type="match status" value="2"/>
</dbReference>
<sequence length="601" mass="65835">MCGIVGYIGYDNAKELLLKGLEKLEYRGYDSAGIAVVNDDNTTVFKEKGRIAELRKVADSSDFDGPVGIGHTRWATHGVPNHENSHPHQSSNGRFTLVHNGVIENYEELKGEYLQGVSFISETDTEVIVQLVEYFSNQGLSTEEAFTKVVSLLHGSYALGLLDAEDKDTIYVAKNKSPLLLGVGEGFNVIASDALAMLQVTSEYKEIHDHEIVIVKKDEVIIKDADGNVVERDSYIAEIDASDAEKGVYAHYMLKEIHEQPAVMRRIIQEYQDAEGNLKIDQDIINDVKEADRIYVIAAGTSYHAGLVGKEFLEKWAGVPTEVHVASEFVYNMPLLSEKPLFVYISQSGETADSRAVLVETNKLGHKSLTITNVAGSTLSREADHTLLLHAGPEIAVASTKAYTAQIAVLSILSQIVAKEHGREADIDLLRELAKVTTAIEAIVDDAPIMEQIATDFLETTRNAFFIGRTIDYNVSLEGALKLKEISYIQAEGFAGGELKHGTIALIEDGTPVVALATQENVNLSIRGNVKEVVARGAHPCIISMEGLEKEGDTYVIPHVHELLTPLVSVVALQLISYYAALHRDLDVDKPRNLAKSVTVE</sequence>
<feature type="initiator methionine" description="Removed" evidence="1">
    <location>
        <position position="1"/>
    </location>
</feature>
<feature type="chain" id="PRO_0000135381" description="Glutamine--fructose-6-phosphate aminotransferase [isomerizing]">
    <location>
        <begin position="2"/>
        <end position="601"/>
    </location>
</feature>
<feature type="domain" description="Glutamine amidotransferase type-2" evidence="1">
    <location>
        <begin position="2"/>
        <end position="218"/>
    </location>
</feature>
<feature type="domain" description="SIS 1" evidence="1">
    <location>
        <begin position="284"/>
        <end position="423"/>
    </location>
</feature>
<feature type="domain" description="SIS 2" evidence="1">
    <location>
        <begin position="453"/>
        <end position="591"/>
    </location>
</feature>
<feature type="active site" description="Nucleophile; for GATase activity" evidence="1">
    <location>
        <position position="2"/>
    </location>
</feature>
<feature type="active site" description="For Fru-6P isomerization activity" evidence="1">
    <location>
        <position position="596"/>
    </location>
</feature>
<accession>P64228</accession>
<accession>Q99SA5</accession>
<keyword id="KW-0032">Aminotransferase</keyword>
<keyword id="KW-0963">Cytoplasm</keyword>
<keyword id="KW-0315">Glutamine amidotransferase</keyword>
<keyword id="KW-0677">Repeat</keyword>
<keyword id="KW-0808">Transferase</keyword>
<gene>
    <name evidence="1" type="primary">glmS</name>
    <name type="ordered locus">SA1959</name>
</gene>
<protein>
    <recommendedName>
        <fullName evidence="1">Glutamine--fructose-6-phosphate aminotransferase [isomerizing]</fullName>
        <ecNumber evidence="1">2.6.1.16</ecNumber>
    </recommendedName>
    <alternativeName>
        <fullName evidence="1">D-fructose-6-phosphate amidotransferase</fullName>
    </alternativeName>
    <alternativeName>
        <fullName evidence="1">GFAT</fullName>
    </alternativeName>
    <alternativeName>
        <fullName evidence="1">Glucosamine-6-phosphate synthase</fullName>
    </alternativeName>
    <alternativeName>
        <fullName evidence="1">Hexosephosphate aminotransferase</fullName>
    </alternativeName>
    <alternativeName>
        <fullName evidence="1">L-glutamine--D-fructose-6-phosphate amidotransferase</fullName>
    </alternativeName>
</protein>